<name>TSH1_HUMAN</name>
<keyword id="KW-0025">Alternative splicing</keyword>
<keyword id="KW-0217">Developmental protein</keyword>
<keyword id="KW-0238">DNA-binding</keyword>
<keyword id="KW-0371">Homeobox</keyword>
<keyword id="KW-0479">Metal-binding</keyword>
<keyword id="KW-0539">Nucleus</keyword>
<keyword id="KW-0597">Phosphoprotein</keyword>
<keyword id="KW-1267">Proteomics identification</keyword>
<keyword id="KW-1185">Reference proteome</keyword>
<keyword id="KW-0677">Repeat</keyword>
<keyword id="KW-0678">Repressor</keyword>
<keyword id="KW-0804">Transcription</keyword>
<keyword id="KW-0805">Transcription regulation</keyword>
<keyword id="KW-0862">Zinc</keyword>
<keyword id="KW-0863">Zinc-finger</keyword>
<accession>Q6ZSZ6</accession>
<accession>O60534</accession>
<accession>Q4LE29</accession>
<accession>Q53EU4</accession>
<comment type="function">
    <text evidence="8">Probable transcriptional regulator involved in developmental processes. May act as a transcriptional repressor (Potential).</text>
</comment>
<comment type="subunit">
    <text evidence="1">Interacts (via homeobox domain) with APBB1 (via PID domain 1).</text>
</comment>
<comment type="subcellular location">
    <subcellularLocation>
        <location evidence="8">Nucleus</location>
    </subcellularLocation>
</comment>
<comment type="alternative products">
    <event type="alternative splicing"/>
    <isoform>
        <id>Q6ZSZ6-1</id>
        <name>1</name>
        <sequence type="displayed"/>
    </isoform>
    <isoform>
        <id>Q6ZSZ6-2</id>
        <name>2</name>
        <sequence type="described" ref="VSP_040877"/>
    </isoform>
</comment>
<comment type="tissue specificity">
    <text evidence="4">Expressed in brain; strongly reduced in post-mortem elderly subjects with Alzheimer disease.</text>
</comment>
<comment type="disease" evidence="5">
    <disease id="DI-03316">
        <name>Aural atresia, congenital</name>
        <acronym>CAA</acronym>
        <description>A rare anomaly of the ear that involves some degree of failure of the development of the external auditory canal. The malformation can also involve the tympanic membrane, ossicles and middle ear space. The inner ear development is most often normal. Different CAA forms are known. CAA type I is characterized by bony or fibrous atresia of the lateral part of the external auditory canal and an almost normal medial part and middle ear. CAA type II is the most frequent type and is characterized by partial or total aplasia of the external auditory canal. CAA type IIA involves an external auditory canal with either complete bony atresia of the medial part or partial aplasia that ends blindly in a fistula leading to a rudimentary tympanic membrane. CAA type IIB is characterized by bony stenosis of the total length of the external auditory canal. CAA type III involves bony atresia of the external auditory canal and a very small or absent middle-ear cavity.</description>
        <dbReference type="MIM" id="607842"/>
    </disease>
    <text>The disease is caused by variants affecting the gene represented in this entry.</text>
</comment>
<comment type="similarity">
    <text evidence="8">Belongs to the teashirt C2H2-type zinc-finger protein family.</text>
</comment>
<comment type="sequence caution" evidence="8">
    <conflict type="frameshift">
        <sequence resource="EMBL-CDS" id="AAC18047"/>
    </conflict>
</comment>
<comment type="sequence caution" evidence="8">
    <conflict type="erroneous initiation">
        <sequence resource="EMBL-CDS" id="BAE06124"/>
    </conflict>
    <text>Extended N-terminus.</text>
</comment>
<evidence type="ECO:0000250" key="1"/>
<evidence type="ECO:0000255" key="2">
    <source>
        <dbReference type="PROSITE-ProRule" id="PRU00042"/>
    </source>
</evidence>
<evidence type="ECO:0000256" key="3">
    <source>
        <dbReference type="SAM" id="MobiDB-lite"/>
    </source>
</evidence>
<evidence type="ECO:0000269" key="4">
    <source>
    </source>
</evidence>
<evidence type="ECO:0000269" key="5">
    <source>
    </source>
</evidence>
<evidence type="ECO:0000303" key="6">
    <source>
    </source>
</evidence>
<evidence type="ECO:0000303" key="7">
    <source ref="2"/>
</evidence>
<evidence type="ECO:0000305" key="8"/>
<evidence type="ECO:0007744" key="9">
    <source>
    </source>
</evidence>
<sequence length="1077" mass="117916">MPRRKQQAPRRSAAYVPEEELKAAEIDEEHVEDDGLSLDIQESEYMCNEETEIKEAQSYQNSPVSSATNQDAGYGSPFSESSDQLAHFKGSSSREEKEDPQCPDSVSYPQDSLAQIKAVYANLFSESCWSSLALDLKKSGSTTSTNDASQKESSAPTPTPPTCPVSTTGPTTSTPSTSCSSSTSHSSTTSTSSSSGYDWHQAALAKTLQQTSSYGLLPEPSLFSTVQLYRQNNKLYGSVFTGASKFRCKDCSAAYDTLVELTVHMNETGHYRDDNRDKDSEKTKRWSKPRKRSLMEMEGKEDAQKVLKCMYCGHSFESLQDLSVHMIKTKHYQKVPLKEPVPAITKLVPSTKKRALQDLAPPCSPEPAGMAAEVALSESAKDQKAANPYVTPNNRYGYQNGASYTWQFEARKAQILKCMECGSSHDTLQQLTAHMMVTGHFLKVTTSASKKGKQLVLDPVVEEKIQSIPLPPTTHTRLPASSIKKQPDSPAGSTTSEEKKEPEKEKPPVAGDAEKIKEESEDSLEKFEPSTLYPYLREEDLDDSPKGGLDILKSLENTVSTAISKAQNGAPSWGGYPSIHAAYQLPGTVKPLPAAVQSVQVQPSYAGGVKSLSSAEHNALLHSPGSLTPPPHKSNVSAMEELVEKVTGKVNIKKEERPPEKEKSSLAKAASPIAKENKDFPKTEEVSGKPQKKGPEAETGKAKKEGPLDVHTPNGTEPLKAKVTNGCNNLGIIMDHSPEPSFINPLSALQSIMNTHLGKVSKPVSPSLDPLAMLYKISNSMLDKPVYPATPVKQADAIDRYYYENSDQPIDLTKSKNKPLVSSVADSVASPLRESALMDISDMVKNLTGRLTPKSSTPSTVSEKSDADGSSFEEALDELSPVHKRKGRQSNWNPQHLLILQAQFASSLRETTEGKYIMSDLGPQERVHISKFTGLSMTTISHWLANVKYQLRRTGGTKFLKNLDTGHPVFFCNDCASQFRTASTYISHLETHLGFSLKDLSKLPLNQIQEQQNVSKVLTNKTLGPLGATEEDLGSTFQCKLCNRTFASKHAVKLHLSKTHGKSPEDHLIYVTELEKQ</sequence>
<proteinExistence type="evidence at protein level"/>
<gene>
    <name type="primary">TSHZ1</name>
    <name type="synonym">SDCCAG33</name>
    <name type="synonym">TSH1</name>
</gene>
<dbReference type="EMBL" id="AK127042">
    <property type="protein sequence ID" value="BAC86800.1"/>
    <property type="molecule type" value="mRNA"/>
</dbReference>
<dbReference type="EMBL" id="AB210042">
    <property type="protein sequence ID" value="BAE06124.1"/>
    <property type="status" value="ALT_INIT"/>
    <property type="molecule type" value="mRNA"/>
</dbReference>
<dbReference type="EMBL" id="AC025105">
    <property type="status" value="NOT_ANNOTATED_CDS"/>
    <property type="molecule type" value="Genomic_DNA"/>
</dbReference>
<dbReference type="EMBL" id="AF039698">
    <property type="protein sequence ID" value="AAC18047.1"/>
    <property type="status" value="ALT_FRAME"/>
    <property type="molecule type" value="mRNA"/>
</dbReference>
<dbReference type="EMBL" id="AK223545">
    <property type="protein sequence ID" value="BAD97265.1"/>
    <property type="molecule type" value="mRNA"/>
</dbReference>
<dbReference type="CCDS" id="CCDS12009.1">
    <molecule id="Q6ZSZ6-2"/>
</dbReference>
<dbReference type="CCDS" id="CCDS77199.1">
    <molecule id="Q6ZSZ6-1"/>
</dbReference>
<dbReference type="RefSeq" id="NP_001295139.1">
    <molecule id="Q6ZSZ6-1"/>
    <property type="nucleotide sequence ID" value="NM_001308210.2"/>
</dbReference>
<dbReference type="RefSeq" id="NP_005777.3">
    <molecule id="Q6ZSZ6-2"/>
    <property type="nucleotide sequence ID" value="NM_005786.5"/>
</dbReference>
<dbReference type="RefSeq" id="XP_005266698.1">
    <property type="nucleotide sequence ID" value="XM_005266641.3"/>
</dbReference>
<dbReference type="SMR" id="Q6ZSZ6"/>
<dbReference type="BioGRID" id="115489">
    <property type="interactions" value="15"/>
</dbReference>
<dbReference type="FunCoup" id="Q6ZSZ6">
    <property type="interactions" value="1548"/>
</dbReference>
<dbReference type="IntAct" id="Q6ZSZ6">
    <property type="interactions" value="8"/>
</dbReference>
<dbReference type="MINT" id="Q6ZSZ6"/>
<dbReference type="STRING" id="9606.ENSP00000464391"/>
<dbReference type="GlyGen" id="Q6ZSZ6">
    <property type="glycosylation" value="7 sites, 1 N-linked glycan (1 site), 1 O-linked glycan (2 sites)"/>
</dbReference>
<dbReference type="iPTMnet" id="Q6ZSZ6"/>
<dbReference type="PhosphoSitePlus" id="Q6ZSZ6"/>
<dbReference type="BioMuta" id="TSHZ1"/>
<dbReference type="DMDM" id="85683261"/>
<dbReference type="jPOST" id="Q6ZSZ6"/>
<dbReference type="MassIVE" id="Q6ZSZ6"/>
<dbReference type="PaxDb" id="9606-ENSP00000323584"/>
<dbReference type="PeptideAtlas" id="Q6ZSZ6"/>
<dbReference type="ProteomicsDB" id="68249">
    <molecule id="Q6ZSZ6-1"/>
</dbReference>
<dbReference type="ProteomicsDB" id="68250">
    <molecule id="Q6ZSZ6-2"/>
</dbReference>
<dbReference type="Antibodypedia" id="1827">
    <property type="antibodies" value="197 antibodies from 31 providers"/>
</dbReference>
<dbReference type="DNASU" id="10194"/>
<dbReference type="Ensembl" id="ENST00000322038.5">
    <molecule id="Q6ZSZ6-2"/>
    <property type="protein sequence ID" value="ENSP00000323584.5"/>
    <property type="gene ID" value="ENSG00000179981.11"/>
</dbReference>
<dbReference type="Ensembl" id="ENST00000580243.3">
    <molecule id="Q6ZSZ6-1"/>
    <property type="protein sequence ID" value="ENSP00000464391.1"/>
    <property type="gene ID" value="ENSG00000179981.11"/>
</dbReference>
<dbReference type="GeneID" id="10194"/>
<dbReference type="KEGG" id="hsa:10194"/>
<dbReference type="MANE-Select" id="ENST00000580243.3">
    <property type="protein sequence ID" value="ENSP00000464391.1"/>
    <property type="RefSeq nucleotide sequence ID" value="NM_001308210.2"/>
    <property type="RefSeq protein sequence ID" value="NP_001295139.1"/>
</dbReference>
<dbReference type="UCSC" id="uc002lly.4">
    <molecule id="Q6ZSZ6-1"/>
    <property type="organism name" value="human"/>
</dbReference>
<dbReference type="AGR" id="HGNC:10669"/>
<dbReference type="CTD" id="10194"/>
<dbReference type="DisGeNET" id="10194"/>
<dbReference type="GeneCards" id="TSHZ1"/>
<dbReference type="HGNC" id="HGNC:10669">
    <property type="gene designation" value="TSHZ1"/>
</dbReference>
<dbReference type="HPA" id="ENSG00000179981">
    <property type="expression patterns" value="Low tissue specificity"/>
</dbReference>
<dbReference type="MalaCards" id="TSHZ1"/>
<dbReference type="MIM" id="607842">
    <property type="type" value="phenotype"/>
</dbReference>
<dbReference type="MIM" id="614427">
    <property type="type" value="gene"/>
</dbReference>
<dbReference type="neXtProt" id="NX_Q6ZSZ6"/>
<dbReference type="OpenTargets" id="ENSG00000179981"/>
<dbReference type="Orphanet" id="141074">
    <property type="disease" value="External auditory canal aplasia/hypoplasia"/>
</dbReference>
<dbReference type="PharmGKB" id="PA35599"/>
<dbReference type="VEuPathDB" id="HostDB:ENSG00000179981"/>
<dbReference type="eggNOG" id="ENOG502RJS7">
    <property type="taxonomic scope" value="Eukaryota"/>
</dbReference>
<dbReference type="GeneTree" id="ENSGT00950000183051"/>
<dbReference type="HOGENOM" id="CLU_010469_0_0_1"/>
<dbReference type="InParanoid" id="Q6ZSZ6"/>
<dbReference type="OMA" id="TNQEAGY"/>
<dbReference type="OrthoDB" id="5815793at2759"/>
<dbReference type="PAN-GO" id="Q6ZSZ6">
    <property type="GO annotations" value="4 GO annotations based on evolutionary models"/>
</dbReference>
<dbReference type="PhylomeDB" id="Q6ZSZ6"/>
<dbReference type="TreeFam" id="TF328447"/>
<dbReference type="PathwayCommons" id="Q6ZSZ6"/>
<dbReference type="SignaLink" id="Q6ZSZ6"/>
<dbReference type="BioGRID-ORCS" id="10194">
    <property type="hits" value="11 hits in 1177 CRISPR screens"/>
</dbReference>
<dbReference type="ChiTaRS" id="TSHZ1">
    <property type="organism name" value="human"/>
</dbReference>
<dbReference type="GenomeRNAi" id="10194"/>
<dbReference type="Pharos" id="Q6ZSZ6">
    <property type="development level" value="Tbio"/>
</dbReference>
<dbReference type="PRO" id="PR:Q6ZSZ6"/>
<dbReference type="Proteomes" id="UP000005640">
    <property type="component" value="Chromosome 18"/>
</dbReference>
<dbReference type="RNAct" id="Q6ZSZ6">
    <property type="molecule type" value="protein"/>
</dbReference>
<dbReference type="Bgee" id="ENSG00000179981">
    <property type="expression patterns" value="Expressed in jejunal mucosa and 191 other cell types or tissues"/>
</dbReference>
<dbReference type="ExpressionAtlas" id="Q6ZSZ6">
    <property type="expression patterns" value="baseline and differential"/>
</dbReference>
<dbReference type="GO" id="GO:0000785">
    <property type="term" value="C:chromatin"/>
    <property type="evidence" value="ECO:0000247"/>
    <property type="project" value="NTNU_SB"/>
</dbReference>
<dbReference type="GO" id="GO:0005634">
    <property type="term" value="C:nucleus"/>
    <property type="evidence" value="ECO:0000318"/>
    <property type="project" value="GO_Central"/>
</dbReference>
<dbReference type="GO" id="GO:0003677">
    <property type="term" value="F:DNA binding"/>
    <property type="evidence" value="ECO:0000318"/>
    <property type="project" value="GO_Central"/>
</dbReference>
<dbReference type="GO" id="GO:0000981">
    <property type="term" value="F:DNA-binding transcription factor activity, RNA polymerase II-specific"/>
    <property type="evidence" value="ECO:0000247"/>
    <property type="project" value="NTNU_SB"/>
</dbReference>
<dbReference type="GO" id="GO:0008270">
    <property type="term" value="F:zinc ion binding"/>
    <property type="evidence" value="ECO:0007669"/>
    <property type="project" value="UniProtKB-KW"/>
</dbReference>
<dbReference type="GO" id="GO:0009952">
    <property type="term" value="P:anterior/posterior pattern specification"/>
    <property type="evidence" value="ECO:0007669"/>
    <property type="project" value="Ensembl"/>
</dbReference>
<dbReference type="GO" id="GO:0042474">
    <property type="term" value="P:middle ear morphogenesis"/>
    <property type="evidence" value="ECO:0007669"/>
    <property type="project" value="Ensembl"/>
</dbReference>
<dbReference type="GO" id="GO:0006357">
    <property type="term" value="P:regulation of transcription by RNA polymerase II"/>
    <property type="evidence" value="ECO:0000318"/>
    <property type="project" value="GO_Central"/>
</dbReference>
<dbReference type="GO" id="GO:0060023">
    <property type="term" value="P:soft palate development"/>
    <property type="evidence" value="ECO:0007669"/>
    <property type="project" value="Ensembl"/>
</dbReference>
<dbReference type="CDD" id="cd00086">
    <property type="entry name" value="homeodomain"/>
    <property type="match status" value="1"/>
</dbReference>
<dbReference type="Gene3D" id="3.30.160.60">
    <property type="entry name" value="Classic Zinc Finger"/>
    <property type="match status" value="2"/>
</dbReference>
<dbReference type="InterPro" id="IPR001356">
    <property type="entry name" value="HD"/>
</dbReference>
<dbReference type="InterPro" id="IPR027008">
    <property type="entry name" value="Teashirt_fam"/>
</dbReference>
<dbReference type="InterPro" id="IPR013087">
    <property type="entry name" value="Znf_C2H2_type"/>
</dbReference>
<dbReference type="PANTHER" id="PTHR12487:SF6">
    <property type="entry name" value="TEASHIRT HOMOLOG 1"/>
    <property type="match status" value="1"/>
</dbReference>
<dbReference type="PANTHER" id="PTHR12487">
    <property type="entry name" value="TEASHIRT-RELATED"/>
    <property type="match status" value="1"/>
</dbReference>
<dbReference type="SMART" id="SM00389">
    <property type="entry name" value="HOX"/>
    <property type="match status" value="1"/>
</dbReference>
<dbReference type="SMART" id="SM00355">
    <property type="entry name" value="ZnF_C2H2"/>
    <property type="match status" value="5"/>
</dbReference>
<dbReference type="PROSITE" id="PS00028">
    <property type="entry name" value="ZINC_FINGER_C2H2_1"/>
    <property type="match status" value="4"/>
</dbReference>
<dbReference type="PROSITE" id="PS50157">
    <property type="entry name" value="ZINC_FINGER_C2H2_2"/>
    <property type="match status" value="3"/>
</dbReference>
<organism>
    <name type="scientific">Homo sapiens</name>
    <name type="common">Human</name>
    <dbReference type="NCBI Taxonomy" id="9606"/>
    <lineage>
        <taxon>Eukaryota</taxon>
        <taxon>Metazoa</taxon>
        <taxon>Chordata</taxon>
        <taxon>Craniata</taxon>
        <taxon>Vertebrata</taxon>
        <taxon>Euteleostomi</taxon>
        <taxon>Mammalia</taxon>
        <taxon>Eutheria</taxon>
        <taxon>Euarchontoglires</taxon>
        <taxon>Primates</taxon>
        <taxon>Haplorrhini</taxon>
        <taxon>Catarrhini</taxon>
        <taxon>Hominidae</taxon>
        <taxon>Homo</taxon>
    </lineage>
</organism>
<protein>
    <recommendedName>
        <fullName>Teashirt homolog 1</fullName>
    </recommendedName>
    <alternativeName>
        <fullName>Antigen NY-CO-33</fullName>
    </alternativeName>
    <alternativeName>
        <fullName>Serologically defined colon cancer antigen 33</fullName>
    </alternativeName>
</protein>
<feature type="chain" id="PRO_0000047062" description="Teashirt homolog 1">
    <location>
        <begin position="1"/>
        <end position="1077"/>
    </location>
</feature>
<feature type="zinc finger region" description="C2H2-type 1" evidence="2">
    <location>
        <begin position="246"/>
        <end position="270"/>
    </location>
</feature>
<feature type="zinc finger region" description="C2H2-type 2" evidence="2">
    <location>
        <begin position="307"/>
        <end position="331"/>
    </location>
</feature>
<feature type="zinc finger region" description="C2H2-type 3; atypical" evidence="2">
    <location>
        <begin position="416"/>
        <end position="440"/>
    </location>
</feature>
<feature type="DNA-binding region" description="Homeobox; atypical">
    <location>
        <begin position="885"/>
        <end position="955"/>
    </location>
</feature>
<feature type="zinc finger region" description="C2H2-type 4" evidence="2">
    <location>
        <begin position="970"/>
        <end position="992"/>
    </location>
</feature>
<feature type="zinc finger region" description="C2H2-type 5" evidence="2">
    <location>
        <begin position="1037"/>
        <end position="1060"/>
    </location>
</feature>
<feature type="region of interest" description="Disordered" evidence="3">
    <location>
        <begin position="1"/>
        <end position="109"/>
    </location>
</feature>
<feature type="region of interest" description="Disordered" evidence="3">
    <location>
        <begin position="139"/>
        <end position="195"/>
    </location>
</feature>
<feature type="region of interest" description="Disordered" evidence="3">
    <location>
        <begin position="269"/>
        <end position="298"/>
    </location>
</feature>
<feature type="region of interest" description="Disordered" evidence="3">
    <location>
        <begin position="467"/>
        <end position="549"/>
    </location>
</feature>
<feature type="region of interest" description="Disordered" evidence="3">
    <location>
        <begin position="647"/>
        <end position="720"/>
    </location>
</feature>
<feature type="region of interest" description="Disordered" evidence="3">
    <location>
        <begin position="848"/>
        <end position="873"/>
    </location>
</feature>
<feature type="compositionally biased region" description="Acidic residues" evidence="3">
    <location>
        <begin position="26"/>
        <end position="36"/>
    </location>
</feature>
<feature type="compositionally biased region" description="Polar residues" evidence="3">
    <location>
        <begin position="57"/>
        <end position="71"/>
    </location>
</feature>
<feature type="compositionally biased region" description="Polar residues" evidence="3">
    <location>
        <begin position="139"/>
        <end position="152"/>
    </location>
</feature>
<feature type="compositionally biased region" description="Low complexity" evidence="3">
    <location>
        <begin position="164"/>
        <end position="195"/>
    </location>
</feature>
<feature type="compositionally biased region" description="Basic and acidic residues" evidence="3">
    <location>
        <begin position="269"/>
        <end position="284"/>
    </location>
</feature>
<feature type="compositionally biased region" description="Basic and acidic residues" evidence="3">
    <location>
        <begin position="496"/>
        <end position="528"/>
    </location>
</feature>
<feature type="compositionally biased region" description="Basic and acidic residues" evidence="3">
    <location>
        <begin position="647"/>
        <end position="665"/>
    </location>
</feature>
<feature type="compositionally biased region" description="Basic and acidic residues" evidence="3">
    <location>
        <begin position="675"/>
        <end position="708"/>
    </location>
</feature>
<feature type="compositionally biased region" description="Polar residues" evidence="3">
    <location>
        <begin position="853"/>
        <end position="862"/>
    </location>
</feature>
<feature type="modified residue" description="Phosphoserine" evidence="9">
    <location>
        <position position="765"/>
    </location>
</feature>
<feature type="splice variant" id="VSP_040877" description="In isoform 2." evidence="6 7">
    <location>
        <begin position="1"/>
        <end position="45"/>
    </location>
</feature>
<feature type="sequence variant" id="VAR_061926" description="In dbSNP:rs55679337.">
    <original>L</original>
    <variation>P</variation>
    <location>
        <position position="666"/>
    </location>
</feature>
<feature type="sequence conflict" description="In Ref. 5; BAD97265." evidence="8" ref="5">
    <original>A</original>
    <variation>T</variation>
    <location>
        <position position="513"/>
    </location>
</feature>
<feature type="sequence conflict" description="In Ref. 4; AAC18047." evidence="8" ref="4">
    <original>GK</original>
    <variation>WE</variation>
    <location>
        <begin position="700"/>
        <end position="701"/>
    </location>
</feature>
<feature type="sequence conflict" description="In Ref. 1; BAC86800." evidence="8" ref="1">
    <original>H</original>
    <variation>R</variation>
    <location>
        <position position="736"/>
    </location>
</feature>
<feature type="sequence conflict" description="In Ref. 1; BAC86800." evidence="8" ref="1">
    <original>K</original>
    <variation>E</variation>
    <location>
        <position position="886"/>
    </location>
</feature>
<reference key="1">
    <citation type="journal article" date="2004" name="Nat. Genet.">
        <title>Complete sequencing and characterization of 21,243 full-length human cDNAs.</title>
        <authorList>
            <person name="Ota T."/>
            <person name="Suzuki Y."/>
            <person name="Nishikawa T."/>
            <person name="Otsuki T."/>
            <person name="Sugiyama T."/>
            <person name="Irie R."/>
            <person name="Wakamatsu A."/>
            <person name="Hayashi K."/>
            <person name="Sato H."/>
            <person name="Nagai K."/>
            <person name="Kimura K."/>
            <person name="Makita H."/>
            <person name="Sekine M."/>
            <person name="Obayashi M."/>
            <person name="Nishi T."/>
            <person name="Shibahara T."/>
            <person name="Tanaka T."/>
            <person name="Ishii S."/>
            <person name="Yamamoto J."/>
            <person name="Saito K."/>
            <person name="Kawai Y."/>
            <person name="Isono Y."/>
            <person name="Nakamura Y."/>
            <person name="Nagahari K."/>
            <person name="Murakami K."/>
            <person name="Yasuda T."/>
            <person name="Iwayanagi T."/>
            <person name="Wagatsuma M."/>
            <person name="Shiratori A."/>
            <person name="Sudo H."/>
            <person name="Hosoiri T."/>
            <person name="Kaku Y."/>
            <person name="Kodaira H."/>
            <person name="Kondo H."/>
            <person name="Sugawara M."/>
            <person name="Takahashi M."/>
            <person name="Kanda K."/>
            <person name="Yokoi T."/>
            <person name="Furuya T."/>
            <person name="Kikkawa E."/>
            <person name="Omura Y."/>
            <person name="Abe K."/>
            <person name="Kamihara K."/>
            <person name="Katsuta N."/>
            <person name="Sato K."/>
            <person name="Tanikawa M."/>
            <person name="Yamazaki M."/>
            <person name="Ninomiya K."/>
            <person name="Ishibashi T."/>
            <person name="Yamashita H."/>
            <person name="Murakawa K."/>
            <person name="Fujimori K."/>
            <person name="Tanai H."/>
            <person name="Kimata M."/>
            <person name="Watanabe M."/>
            <person name="Hiraoka S."/>
            <person name="Chiba Y."/>
            <person name="Ishida S."/>
            <person name="Ono Y."/>
            <person name="Takiguchi S."/>
            <person name="Watanabe S."/>
            <person name="Yosida M."/>
            <person name="Hotuta T."/>
            <person name="Kusano J."/>
            <person name="Kanehori K."/>
            <person name="Takahashi-Fujii A."/>
            <person name="Hara H."/>
            <person name="Tanase T.-O."/>
            <person name="Nomura Y."/>
            <person name="Togiya S."/>
            <person name="Komai F."/>
            <person name="Hara R."/>
            <person name="Takeuchi K."/>
            <person name="Arita M."/>
            <person name="Imose N."/>
            <person name="Musashino K."/>
            <person name="Yuuki H."/>
            <person name="Oshima A."/>
            <person name="Sasaki N."/>
            <person name="Aotsuka S."/>
            <person name="Yoshikawa Y."/>
            <person name="Matsunawa H."/>
            <person name="Ichihara T."/>
            <person name="Shiohata N."/>
            <person name="Sano S."/>
            <person name="Moriya S."/>
            <person name="Momiyama H."/>
            <person name="Satoh N."/>
            <person name="Takami S."/>
            <person name="Terashima Y."/>
            <person name="Suzuki O."/>
            <person name="Nakagawa S."/>
            <person name="Senoh A."/>
            <person name="Mizoguchi H."/>
            <person name="Goto Y."/>
            <person name="Shimizu F."/>
            <person name="Wakebe H."/>
            <person name="Hishigaki H."/>
            <person name="Watanabe T."/>
            <person name="Sugiyama A."/>
            <person name="Takemoto M."/>
            <person name="Kawakami B."/>
            <person name="Yamazaki M."/>
            <person name="Watanabe K."/>
            <person name="Kumagai A."/>
            <person name="Itakura S."/>
            <person name="Fukuzumi Y."/>
            <person name="Fujimori Y."/>
            <person name="Komiyama M."/>
            <person name="Tashiro H."/>
            <person name="Tanigami A."/>
            <person name="Fujiwara T."/>
            <person name="Ono T."/>
            <person name="Yamada K."/>
            <person name="Fujii Y."/>
            <person name="Ozaki K."/>
            <person name="Hirao M."/>
            <person name="Ohmori Y."/>
            <person name="Kawabata A."/>
            <person name="Hikiji T."/>
            <person name="Kobatake N."/>
            <person name="Inagaki H."/>
            <person name="Ikema Y."/>
            <person name="Okamoto S."/>
            <person name="Okitani R."/>
            <person name="Kawakami T."/>
            <person name="Noguchi S."/>
            <person name="Itoh T."/>
            <person name="Shigeta K."/>
            <person name="Senba T."/>
            <person name="Matsumura K."/>
            <person name="Nakajima Y."/>
            <person name="Mizuno T."/>
            <person name="Morinaga M."/>
            <person name="Sasaki M."/>
            <person name="Togashi T."/>
            <person name="Oyama M."/>
            <person name="Hata H."/>
            <person name="Watanabe M."/>
            <person name="Komatsu T."/>
            <person name="Mizushima-Sugano J."/>
            <person name="Satoh T."/>
            <person name="Shirai Y."/>
            <person name="Takahashi Y."/>
            <person name="Nakagawa K."/>
            <person name="Okumura K."/>
            <person name="Nagase T."/>
            <person name="Nomura N."/>
            <person name="Kikuchi H."/>
            <person name="Masuho Y."/>
            <person name="Yamashita R."/>
            <person name="Nakai K."/>
            <person name="Yada T."/>
            <person name="Nakamura Y."/>
            <person name="Ohara O."/>
            <person name="Isogai T."/>
            <person name="Sugano S."/>
        </authorList>
    </citation>
    <scope>NUCLEOTIDE SEQUENCE [LARGE SCALE MRNA] (ISOFORM 2)</scope>
    <source>
        <tissue>Brain</tissue>
    </source>
</reference>
<reference key="2">
    <citation type="submission" date="2005-03" db="EMBL/GenBank/DDBJ databases">
        <title>Preparation of a set of expression-ready clones of mammalian long cDNAs encoding large proteins by the ORF trap cloning method.</title>
        <authorList>
            <person name="Nakajima D."/>
            <person name="Saito K."/>
            <person name="Yamakawa H."/>
            <person name="Kikuno R.F."/>
            <person name="Nakayama M."/>
            <person name="Ohara R."/>
            <person name="Okazaki N."/>
            <person name="Koga H."/>
            <person name="Nagase T."/>
            <person name="Ohara O."/>
        </authorList>
    </citation>
    <scope>NUCLEOTIDE SEQUENCE [LARGE SCALE MRNA] (ISOFORM 2)</scope>
    <source>
        <tissue>Brain</tissue>
    </source>
</reference>
<reference key="3">
    <citation type="journal article" date="2005" name="Nature">
        <title>DNA sequence and analysis of human chromosome 18.</title>
        <authorList>
            <person name="Nusbaum C."/>
            <person name="Zody M.C."/>
            <person name="Borowsky M.L."/>
            <person name="Kamal M."/>
            <person name="Kodira C.D."/>
            <person name="Taylor T.D."/>
            <person name="Whittaker C.A."/>
            <person name="Chang J.L."/>
            <person name="Cuomo C.A."/>
            <person name="Dewar K."/>
            <person name="FitzGerald M.G."/>
            <person name="Yang X."/>
            <person name="Abouelleil A."/>
            <person name="Allen N.R."/>
            <person name="Anderson S."/>
            <person name="Bloom T."/>
            <person name="Bugalter B."/>
            <person name="Butler J."/>
            <person name="Cook A."/>
            <person name="DeCaprio D."/>
            <person name="Engels R."/>
            <person name="Garber M."/>
            <person name="Gnirke A."/>
            <person name="Hafez N."/>
            <person name="Hall J.L."/>
            <person name="Norman C.H."/>
            <person name="Itoh T."/>
            <person name="Jaffe D.B."/>
            <person name="Kuroki Y."/>
            <person name="Lehoczky J."/>
            <person name="Lui A."/>
            <person name="Macdonald P."/>
            <person name="Mauceli E."/>
            <person name="Mikkelsen T.S."/>
            <person name="Naylor J.W."/>
            <person name="Nicol R."/>
            <person name="Nguyen C."/>
            <person name="Noguchi H."/>
            <person name="O'Leary S.B."/>
            <person name="Piqani B."/>
            <person name="Smith C.L."/>
            <person name="Talamas J.A."/>
            <person name="Topham K."/>
            <person name="Totoki Y."/>
            <person name="Toyoda A."/>
            <person name="Wain H.M."/>
            <person name="Young S.K."/>
            <person name="Zeng Q."/>
            <person name="Zimmer A.R."/>
            <person name="Fujiyama A."/>
            <person name="Hattori M."/>
            <person name="Birren B.W."/>
            <person name="Sakaki Y."/>
            <person name="Lander E.S."/>
        </authorList>
    </citation>
    <scope>NUCLEOTIDE SEQUENCE [LARGE SCALE GENOMIC DNA]</scope>
</reference>
<reference key="4">
    <citation type="journal article" date="1998" name="Int. J. Cancer">
        <title>Characterization of human colon cancer antigens recognized by autologous antibodies.</title>
        <authorList>
            <person name="Scanlan M.J."/>
            <person name="Chen Y.-T."/>
            <person name="Williamson B."/>
            <person name="Gure A.O."/>
            <person name="Stockert E."/>
            <person name="Gordan J.D."/>
            <person name="Tuereci O."/>
            <person name="Sahin U."/>
            <person name="Pfreundschuh M."/>
            <person name="Old L.J."/>
        </authorList>
    </citation>
    <scope>NUCLEOTIDE SEQUENCE [MRNA] OF 273-1077 (ISOFORMS 1/2)</scope>
    <source>
        <tissue>Colon carcinoma</tissue>
    </source>
</reference>
<reference key="5">
    <citation type="submission" date="2005-04" db="EMBL/GenBank/DDBJ databases">
        <authorList>
            <person name="Totoki Y."/>
            <person name="Toyoda A."/>
            <person name="Takeda T."/>
            <person name="Sakaki Y."/>
            <person name="Tanaka A."/>
            <person name="Yokoyama S."/>
        </authorList>
    </citation>
    <scope>NUCLEOTIDE SEQUENCE [LARGE SCALE MRNA] OF 320-1077 (ISOFORMS 1/2)</scope>
    <source>
        <tissue>Kidney</tissue>
    </source>
</reference>
<reference key="6">
    <citation type="journal article" date="2009" name="PLoS ONE">
        <title>FE65 binds Teashirt, inhibiting expression of the primate-specific caspase-4.</title>
        <authorList>
            <person name="Kajiwara Y."/>
            <person name="Akram A."/>
            <person name="Katsel P."/>
            <person name="Haroutunian V."/>
            <person name="Schmeidler J."/>
            <person name="Beecham G."/>
            <person name="Haines J.L."/>
            <person name="Pericak-Vance M.A."/>
            <person name="Buxbaum J.D."/>
        </authorList>
    </citation>
    <scope>TISSUE SPECIFICITY</scope>
</reference>
<reference key="7">
    <citation type="journal article" date="2011" name="Am. J. Hum. Genet.">
        <title>Disruption of teashirt zinc finger homeobox 1 is associated with congenital aural atresia in humans.</title>
        <authorList>
            <person name="Feenstra I."/>
            <person name="Vissers L.E."/>
            <person name="Pennings R.J."/>
            <person name="Nillessen W."/>
            <person name="Pfundt R."/>
            <person name="Kunst H.P."/>
            <person name="Admiraal R.J."/>
            <person name="Veltman J.A."/>
            <person name="van Ravenswaaij-Arts C.M."/>
            <person name="Brunner H.G."/>
            <person name="Cremers C.W."/>
        </authorList>
    </citation>
    <scope>INVOLVEMENT IN CAA</scope>
</reference>
<reference key="8">
    <citation type="journal article" date="2013" name="J. Proteome Res.">
        <title>Toward a comprehensive characterization of a human cancer cell phosphoproteome.</title>
        <authorList>
            <person name="Zhou H."/>
            <person name="Di Palma S."/>
            <person name="Preisinger C."/>
            <person name="Peng M."/>
            <person name="Polat A.N."/>
            <person name="Heck A.J."/>
            <person name="Mohammed S."/>
        </authorList>
    </citation>
    <scope>PHOSPHORYLATION [LARGE SCALE ANALYSIS] AT SER-765</scope>
    <scope>IDENTIFICATION BY MASS SPECTROMETRY [LARGE SCALE ANALYSIS]</scope>
    <source>
        <tissue>Erythroleukemia</tissue>
    </source>
</reference>